<accession>Q89SJ4</accession>
<proteinExistence type="inferred from homology"/>
<reference key="1">
    <citation type="journal article" date="2002" name="DNA Res.">
        <title>Complete genomic sequence of nitrogen-fixing symbiotic bacterium Bradyrhizobium japonicum USDA110.</title>
        <authorList>
            <person name="Kaneko T."/>
            <person name="Nakamura Y."/>
            <person name="Sato S."/>
            <person name="Minamisawa K."/>
            <person name="Uchiumi T."/>
            <person name="Sasamoto S."/>
            <person name="Watanabe A."/>
            <person name="Idesawa K."/>
            <person name="Iriguchi M."/>
            <person name="Kawashima K."/>
            <person name="Kohara M."/>
            <person name="Matsumoto M."/>
            <person name="Shimpo S."/>
            <person name="Tsuruoka H."/>
            <person name="Wada T."/>
            <person name="Yamada M."/>
            <person name="Tabata S."/>
        </authorList>
    </citation>
    <scope>NUCLEOTIDE SEQUENCE [LARGE SCALE GENOMIC DNA]</scope>
    <source>
        <strain>JCM 10833 / BCRC 13528 / IAM 13628 / NBRC 14792 / USDA 110</strain>
    </source>
</reference>
<sequence length="72" mass="7255">MGSTTDKIKGNANEAIGKAKQGIGEATGSDRLKGEGVVQEVKGKGQQAMGDAKDAAKEAIDRAAAAARRAAE</sequence>
<evidence type="ECO:0000256" key="1">
    <source>
        <dbReference type="SAM" id="MobiDB-lite"/>
    </source>
</evidence>
<evidence type="ECO:0000305" key="2"/>
<organism>
    <name type="scientific">Bradyrhizobium diazoefficiens (strain JCM 10833 / BCRC 13528 / IAM 13628 / NBRC 14792 / USDA 110)</name>
    <dbReference type="NCBI Taxonomy" id="224911"/>
    <lineage>
        <taxon>Bacteria</taxon>
        <taxon>Pseudomonadati</taxon>
        <taxon>Pseudomonadota</taxon>
        <taxon>Alphaproteobacteria</taxon>
        <taxon>Hyphomicrobiales</taxon>
        <taxon>Nitrobacteraceae</taxon>
        <taxon>Bradyrhizobium</taxon>
    </lineage>
</organism>
<feature type="chain" id="PRO_0000209994" description="UPF0337 protein bsl2407">
    <location>
        <begin position="1"/>
        <end position="72"/>
    </location>
</feature>
<feature type="region of interest" description="Disordered" evidence="1">
    <location>
        <begin position="1"/>
        <end position="55"/>
    </location>
</feature>
<feature type="compositionally biased region" description="Low complexity" evidence="1">
    <location>
        <begin position="35"/>
        <end position="47"/>
    </location>
</feature>
<comment type="similarity">
    <text evidence="2">Belongs to the UPF0337 (CsbD) family.</text>
</comment>
<gene>
    <name type="ordered locus">bsl2407</name>
</gene>
<keyword id="KW-1185">Reference proteome</keyword>
<dbReference type="EMBL" id="BA000040">
    <property type="protein sequence ID" value="BAC47671.1"/>
    <property type="molecule type" value="Genomic_DNA"/>
</dbReference>
<dbReference type="RefSeq" id="NP_769046.1">
    <property type="nucleotide sequence ID" value="NC_004463.1"/>
</dbReference>
<dbReference type="RefSeq" id="WP_011085193.1">
    <property type="nucleotide sequence ID" value="NC_004463.1"/>
</dbReference>
<dbReference type="SMR" id="Q89SJ4"/>
<dbReference type="STRING" id="224911.AAV28_08935"/>
<dbReference type="EnsemblBacteria" id="BAC47671">
    <property type="protein sequence ID" value="BAC47671"/>
    <property type="gene ID" value="BAC47671"/>
</dbReference>
<dbReference type="GeneID" id="46489445"/>
<dbReference type="KEGG" id="bja:bsl2407"/>
<dbReference type="PATRIC" id="fig|224911.44.peg.1966"/>
<dbReference type="eggNOG" id="COG3237">
    <property type="taxonomic scope" value="Bacteria"/>
</dbReference>
<dbReference type="HOGENOM" id="CLU_135567_3_2_5"/>
<dbReference type="InParanoid" id="Q89SJ4"/>
<dbReference type="OrthoDB" id="7226109at2"/>
<dbReference type="Proteomes" id="UP000002526">
    <property type="component" value="Chromosome"/>
</dbReference>
<dbReference type="Gene3D" id="1.10.1470.10">
    <property type="entry name" value="YjbJ"/>
    <property type="match status" value="1"/>
</dbReference>
<dbReference type="InterPro" id="IPR008462">
    <property type="entry name" value="CsbD"/>
</dbReference>
<dbReference type="InterPro" id="IPR036629">
    <property type="entry name" value="YjbJ_sf"/>
</dbReference>
<dbReference type="Pfam" id="PF05532">
    <property type="entry name" value="CsbD"/>
    <property type="match status" value="1"/>
</dbReference>
<dbReference type="SUPFAM" id="SSF69047">
    <property type="entry name" value="Hypothetical protein YjbJ"/>
    <property type="match status" value="1"/>
</dbReference>
<name>Y2407_BRADU</name>
<protein>
    <recommendedName>
        <fullName>UPF0337 protein bsl2407</fullName>
    </recommendedName>
</protein>